<reference key="1">
    <citation type="submission" date="2007-03" db="EMBL/GenBank/DDBJ databases">
        <authorList>
            <person name="Heidelberg J."/>
        </authorList>
    </citation>
    <scope>NUCLEOTIDE SEQUENCE [LARGE SCALE GENOMIC DNA]</scope>
    <source>
        <strain>ATCC 39541 / Classical Ogawa 395 / O395</strain>
    </source>
</reference>
<reference key="2">
    <citation type="journal article" date="2008" name="PLoS ONE">
        <title>A recalibrated molecular clock and independent origins for the cholera pandemic clones.</title>
        <authorList>
            <person name="Feng L."/>
            <person name="Reeves P.R."/>
            <person name="Lan R."/>
            <person name="Ren Y."/>
            <person name="Gao C."/>
            <person name="Zhou Z."/>
            <person name="Ren Y."/>
            <person name="Cheng J."/>
            <person name="Wang W."/>
            <person name="Wang J."/>
            <person name="Qian W."/>
            <person name="Li D."/>
            <person name="Wang L."/>
        </authorList>
    </citation>
    <scope>NUCLEOTIDE SEQUENCE [LARGE SCALE GENOMIC DNA]</scope>
    <source>
        <strain>ATCC 39541 / Classical Ogawa 395 / O395</strain>
    </source>
</reference>
<dbReference type="EC" id="4.2.1.10" evidence="1"/>
<dbReference type="EMBL" id="CP000627">
    <property type="protein sequence ID" value="ABQ21024.1"/>
    <property type="molecule type" value="Genomic_DNA"/>
</dbReference>
<dbReference type="EMBL" id="CP001235">
    <property type="protein sequence ID" value="ACP08366.1"/>
    <property type="molecule type" value="Genomic_DNA"/>
</dbReference>
<dbReference type="RefSeq" id="WP_000125574.1">
    <property type="nucleotide sequence ID" value="NZ_JAACZH010000020.1"/>
</dbReference>
<dbReference type="SMR" id="A5F3S6"/>
<dbReference type="KEGG" id="vco:VC0395_A2690"/>
<dbReference type="KEGG" id="vcr:VC395_0341"/>
<dbReference type="PATRIC" id="fig|345073.21.peg.329"/>
<dbReference type="eggNOG" id="COG0757">
    <property type="taxonomic scope" value="Bacteria"/>
</dbReference>
<dbReference type="HOGENOM" id="CLU_090968_1_0_6"/>
<dbReference type="OrthoDB" id="9790793at2"/>
<dbReference type="UniPathway" id="UPA00053">
    <property type="reaction ID" value="UER00086"/>
</dbReference>
<dbReference type="Proteomes" id="UP000000249">
    <property type="component" value="Chromosome 2"/>
</dbReference>
<dbReference type="GO" id="GO:0003855">
    <property type="term" value="F:3-dehydroquinate dehydratase activity"/>
    <property type="evidence" value="ECO:0007669"/>
    <property type="project" value="UniProtKB-UniRule"/>
</dbReference>
<dbReference type="GO" id="GO:0008652">
    <property type="term" value="P:amino acid biosynthetic process"/>
    <property type="evidence" value="ECO:0007669"/>
    <property type="project" value="UniProtKB-KW"/>
</dbReference>
<dbReference type="GO" id="GO:0009073">
    <property type="term" value="P:aromatic amino acid family biosynthetic process"/>
    <property type="evidence" value="ECO:0007669"/>
    <property type="project" value="UniProtKB-KW"/>
</dbReference>
<dbReference type="GO" id="GO:0009423">
    <property type="term" value="P:chorismate biosynthetic process"/>
    <property type="evidence" value="ECO:0007669"/>
    <property type="project" value="UniProtKB-UniRule"/>
</dbReference>
<dbReference type="GO" id="GO:0019631">
    <property type="term" value="P:quinate catabolic process"/>
    <property type="evidence" value="ECO:0007669"/>
    <property type="project" value="TreeGrafter"/>
</dbReference>
<dbReference type="CDD" id="cd00466">
    <property type="entry name" value="DHQase_II"/>
    <property type="match status" value="1"/>
</dbReference>
<dbReference type="Gene3D" id="3.40.50.9100">
    <property type="entry name" value="Dehydroquinase, class II"/>
    <property type="match status" value="1"/>
</dbReference>
<dbReference type="HAMAP" id="MF_00169">
    <property type="entry name" value="AroQ"/>
    <property type="match status" value="1"/>
</dbReference>
<dbReference type="InterPro" id="IPR001874">
    <property type="entry name" value="DHquinase_II"/>
</dbReference>
<dbReference type="InterPro" id="IPR018509">
    <property type="entry name" value="DHquinase_II_CS"/>
</dbReference>
<dbReference type="InterPro" id="IPR036441">
    <property type="entry name" value="DHquinase_II_sf"/>
</dbReference>
<dbReference type="NCBIfam" id="TIGR01088">
    <property type="entry name" value="aroQ"/>
    <property type="match status" value="1"/>
</dbReference>
<dbReference type="NCBIfam" id="NF003804">
    <property type="entry name" value="PRK05395.1-1"/>
    <property type="match status" value="1"/>
</dbReference>
<dbReference type="NCBIfam" id="NF003805">
    <property type="entry name" value="PRK05395.1-2"/>
    <property type="match status" value="1"/>
</dbReference>
<dbReference type="NCBIfam" id="NF003806">
    <property type="entry name" value="PRK05395.1-3"/>
    <property type="match status" value="1"/>
</dbReference>
<dbReference type="NCBIfam" id="NF003807">
    <property type="entry name" value="PRK05395.1-4"/>
    <property type="match status" value="1"/>
</dbReference>
<dbReference type="PANTHER" id="PTHR21272">
    <property type="entry name" value="CATABOLIC 3-DEHYDROQUINASE"/>
    <property type="match status" value="1"/>
</dbReference>
<dbReference type="PANTHER" id="PTHR21272:SF3">
    <property type="entry name" value="CATABOLIC 3-DEHYDROQUINASE"/>
    <property type="match status" value="1"/>
</dbReference>
<dbReference type="Pfam" id="PF01220">
    <property type="entry name" value="DHquinase_II"/>
    <property type="match status" value="1"/>
</dbReference>
<dbReference type="PIRSF" id="PIRSF001399">
    <property type="entry name" value="DHquinase_II"/>
    <property type="match status" value="1"/>
</dbReference>
<dbReference type="SUPFAM" id="SSF52304">
    <property type="entry name" value="Type II 3-dehydroquinate dehydratase"/>
    <property type="match status" value="1"/>
</dbReference>
<dbReference type="PROSITE" id="PS01029">
    <property type="entry name" value="DEHYDROQUINASE_II"/>
    <property type="match status" value="1"/>
</dbReference>
<feature type="chain" id="PRO_1000071584" description="3-dehydroquinate dehydratase">
    <location>
        <begin position="1"/>
        <end position="150"/>
    </location>
</feature>
<feature type="active site" description="Proton acceptor" evidence="1">
    <location>
        <position position="26"/>
    </location>
</feature>
<feature type="active site" description="Proton donor" evidence="1">
    <location>
        <position position="103"/>
    </location>
</feature>
<feature type="binding site" evidence="1">
    <location>
        <position position="77"/>
    </location>
    <ligand>
        <name>substrate</name>
    </ligand>
</feature>
<feature type="binding site" evidence="1">
    <location>
        <position position="83"/>
    </location>
    <ligand>
        <name>substrate</name>
    </ligand>
</feature>
<feature type="binding site" evidence="1">
    <location>
        <position position="90"/>
    </location>
    <ligand>
        <name>substrate</name>
    </ligand>
</feature>
<feature type="binding site" evidence="1">
    <location>
        <begin position="104"/>
        <end position="105"/>
    </location>
    <ligand>
        <name>substrate</name>
    </ligand>
</feature>
<feature type="binding site" evidence="1">
    <location>
        <position position="114"/>
    </location>
    <ligand>
        <name>substrate</name>
    </ligand>
</feature>
<feature type="site" description="Transition state stabilizer" evidence="1">
    <location>
        <position position="21"/>
    </location>
</feature>
<accession>A5F3S6</accession>
<accession>C3M3V8</accession>
<name>AROQ_VIBC3</name>
<proteinExistence type="inferred from homology"/>
<organism>
    <name type="scientific">Vibrio cholerae serotype O1 (strain ATCC 39541 / Classical Ogawa 395 / O395)</name>
    <dbReference type="NCBI Taxonomy" id="345073"/>
    <lineage>
        <taxon>Bacteria</taxon>
        <taxon>Pseudomonadati</taxon>
        <taxon>Pseudomonadota</taxon>
        <taxon>Gammaproteobacteria</taxon>
        <taxon>Vibrionales</taxon>
        <taxon>Vibrionaceae</taxon>
        <taxon>Vibrio</taxon>
    </lineage>
</organism>
<protein>
    <recommendedName>
        <fullName evidence="1">3-dehydroquinate dehydratase</fullName>
        <shortName evidence="1">3-dehydroquinase</shortName>
        <ecNumber evidence="1">4.2.1.10</ecNumber>
    </recommendedName>
    <alternativeName>
        <fullName evidence="1">Type II DHQase</fullName>
    </alternativeName>
</protein>
<comment type="function">
    <text evidence="1">Catalyzes a trans-dehydration via an enolate intermediate.</text>
</comment>
<comment type="catalytic activity">
    <reaction evidence="1">
        <text>3-dehydroquinate = 3-dehydroshikimate + H2O</text>
        <dbReference type="Rhea" id="RHEA:21096"/>
        <dbReference type="ChEBI" id="CHEBI:15377"/>
        <dbReference type="ChEBI" id="CHEBI:16630"/>
        <dbReference type="ChEBI" id="CHEBI:32364"/>
        <dbReference type="EC" id="4.2.1.10"/>
    </reaction>
</comment>
<comment type="pathway">
    <text evidence="1">Metabolic intermediate biosynthesis; chorismate biosynthesis; chorismate from D-erythrose 4-phosphate and phosphoenolpyruvate: step 3/7.</text>
</comment>
<comment type="subunit">
    <text evidence="1">Homododecamer.</text>
</comment>
<comment type="similarity">
    <text evidence="1">Belongs to the type-II 3-dehydroquinase family.</text>
</comment>
<evidence type="ECO:0000255" key="1">
    <source>
        <dbReference type="HAMAP-Rule" id="MF_00169"/>
    </source>
</evidence>
<sequence length="150" mass="16562">MTAKSRILVLNGPNLNLLGLREPTHYGSQTLEQIVATLRDQAQKADIELEHLQSNREYELIEAIHQAFGKVDFIIINPAAFTHTSVALRDALLGVAIPFIEVHLSNVHAREPFRHHSYLSDKAQGVICGLGAQGYEFALSAAIRALQAKQ</sequence>
<keyword id="KW-0028">Amino-acid biosynthesis</keyword>
<keyword id="KW-0057">Aromatic amino acid biosynthesis</keyword>
<keyword id="KW-0456">Lyase</keyword>
<gene>
    <name evidence="1" type="primary">aroQ</name>
    <name type="ordered locus">VC0395_A2690</name>
    <name type="ordered locus">VC395_0341</name>
</gene>